<dbReference type="EMBL" id="CU928162">
    <property type="protein sequence ID" value="CAR11196.1"/>
    <property type="molecule type" value="Genomic_DNA"/>
</dbReference>
<dbReference type="RefSeq" id="WP_000175940.1">
    <property type="nucleotide sequence ID" value="NC_011745.1"/>
</dbReference>
<dbReference type="SMR" id="B7MTC0"/>
<dbReference type="KEGG" id="ecq:ECED1_5245"/>
<dbReference type="HOGENOM" id="CLU_002794_2_1_6"/>
<dbReference type="Proteomes" id="UP000000748">
    <property type="component" value="Chromosome"/>
</dbReference>
<dbReference type="GO" id="GO:0005829">
    <property type="term" value="C:cytosol"/>
    <property type="evidence" value="ECO:0007669"/>
    <property type="project" value="TreeGrafter"/>
</dbReference>
<dbReference type="GO" id="GO:0005525">
    <property type="term" value="F:GTP binding"/>
    <property type="evidence" value="ECO:0007669"/>
    <property type="project" value="UniProtKB-UniRule"/>
</dbReference>
<dbReference type="GO" id="GO:0003924">
    <property type="term" value="F:GTPase activity"/>
    <property type="evidence" value="ECO:0007669"/>
    <property type="project" value="InterPro"/>
</dbReference>
<dbReference type="GO" id="GO:0097216">
    <property type="term" value="F:guanosine tetraphosphate binding"/>
    <property type="evidence" value="ECO:0007669"/>
    <property type="project" value="UniProtKB-ARBA"/>
</dbReference>
<dbReference type="GO" id="GO:0016150">
    <property type="term" value="F:translation release factor activity, codon nonspecific"/>
    <property type="evidence" value="ECO:0007669"/>
    <property type="project" value="TreeGrafter"/>
</dbReference>
<dbReference type="GO" id="GO:0016149">
    <property type="term" value="F:translation release factor activity, codon specific"/>
    <property type="evidence" value="ECO:0007669"/>
    <property type="project" value="UniProtKB-UniRule"/>
</dbReference>
<dbReference type="GO" id="GO:0006449">
    <property type="term" value="P:regulation of translational termination"/>
    <property type="evidence" value="ECO:0007669"/>
    <property type="project" value="UniProtKB-UniRule"/>
</dbReference>
<dbReference type="CDD" id="cd04169">
    <property type="entry name" value="RF3"/>
    <property type="match status" value="1"/>
</dbReference>
<dbReference type="CDD" id="cd03689">
    <property type="entry name" value="RF3_II"/>
    <property type="match status" value="1"/>
</dbReference>
<dbReference type="CDD" id="cd16259">
    <property type="entry name" value="RF3_III"/>
    <property type="match status" value="1"/>
</dbReference>
<dbReference type="FunFam" id="2.40.30.10:FF:000040">
    <property type="entry name" value="Peptide chain release factor 3"/>
    <property type="match status" value="1"/>
</dbReference>
<dbReference type="FunFam" id="3.30.70.3280:FF:000001">
    <property type="entry name" value="Peptide chain release factor 3"/>
    <property type="match status" value="1"/>
</dbReference>
<dbReference type="FunFam" id="3.40.50.300:FF:000184">
    <property type="entry name" value="Peptide chain release factor 3"/>
    <property type="match status" value="1"/>
</dbReference>
<dbReference type="FunFam" id="3.40.50.300:FF:000253">
    <property type="entry name" value="Peptide chain release factor 3"/>
    <property type="match status" value="1"/>
</dbReference>
<dbReference type="Gene3D" id="3.40.50.300">
    <property type="entry name" value="P-loop containing nucleotide triphosphate hydrolases"/>
    <property type="match status" value="3"/>
</dbReference>
<dbReference type="Gene3D" id="3.30.70.3280">
    <property type="entry name" value="Peptide chain release factor 3, domain III"/>
    <property type="match status" value="1"/>
</dbReference>
<dbReference type="HAMAP" id="MF_00072">
    <property type="entry name" value="Rel_fac_3"/>
    <property type="match status" value="1"/>
</dbReference>
<dbReference type="InterPro" id="IPR053905">
    <property type="entry name" value="EF-G-like_DII"/>
</dbReference>
<dbReference type="InterPro" id="IPR035647">
    <property type="entry name" value="EFG_III/V"/>
</dbReference>
<dbReference type="InterPro" id="IPR031157">
    <property type="entry name" value="G_TR_CS"/>
</dbReference>
<dbReference type="InterPro" id="IPR027417">
    <property type="entry name" value="P-loop_NTPase"/>
</dbReference>
<dbReference type="InterPro" id="IPR004548">
    <property type="entry name" value="PrfC"/>
</dbReference>
<dbReference type="InterPro" id="IPR032090">
    <property type="entry name" value="RF3_C"/>
</dbReference>
<dbReference type="InterPro" id="IPR038467">
    <property type="entry name" value="RF3_dom_3_sf"/>
</dbReference>
<dbReference type="InterPro" id="IPR041732">
    <property type="entry name" value="RF3_GTP-bd"/>
</dbReference>
<dbReference type="InterPro" id="IPR005225">
    <property type="entry name" value="Small_GTP-bd"/>
</dbReference>
<dbReference type="InterPro" id="IPR000795">
    <property type="entry name" value="T_Tr_GTP-bd_dom"/>
</dbReference>
<dbReference type="InterPro" id="IPR009000">
    <property type="entry name" value="Transl_B-barrel_sf"/>
</dbReference>
<dbReference type="NCBIfam" id="TIGR00503">
    <property type="entry name" value="prfC"/>
    <property type="match status" value="1"/>
</dbReference>
<dbReference type="NCBIfam" id="NF001964">
    <property type="entry name" value="PRK00741.1"/>
    <property type="match status" value="1"/>
</dbReference>
<dbReference type="NCBIfam" id="TIGR00231">
    <property type="entry name" value="small_GTP"/>
    <property type="match status" value="1"/>
</dbReference>
<dbReference type="PANTHER" id="PTHR43556">
    <property type="entry name" value="PEPTIDE CHAIN RELEASE FACTOR RF3"/>
    <property type="match status" value="1"/>
</dbReference>
<dbReference type="PANTHER" id="PTHR43556:SF2">
    <property type="entry name" value="PEPTIDE CHAIN RELEASE FACTOR RF3"/>
    <property type="match status" value="1"/>
</dbReference>
<dbReference type="Pfam" id="PF22042">
    <property type="entry name" value="EF-G_D2"/>
    <property type="match status" value="1"/>
</dbReference>
<dbReference type="Pfam" id="PF00009">
    <property type="entry name" value="GTP_EFTU"/>
    <property type="match status" value="1"/>
</dbReference>
<dbReference type="Pfam" id="PF16658">
    <property type="entry name" value="RF3_C"/>
    <property type="match status" value="1"/>
</dbReference>
<dbReference type="PRINTS" id="PR00315">
    <property type="entry name" value="ELONGATNFCT"/>
</dbReference>
<dbReference type="SUPFAM" id="SSF54980">
    <property type="entry name" value="EF-G C-terminal domain-like"/>
    <property type="match status" value="1"/>
</dbReference>
<dbReference type="SUPFAM" id="SSF52540">
    <property type="entry name" value="P-loop containing nucleoside triphosphate hydrolases"/>
    <property type="match status" value="1"/>
</dbReference>
<dbReference type="SUPFAM" id="SSF50447">
    <property type="entry name" value="Translation proteins"/>
    <property type="match status" value="1"/>
</dbReference>
<dbReference type="PROSITE" id="PS00301">
    <property type="entry name" value="G_TR_1"/>
    <property type="match status" value="1"/>
</dbReference>
<dbReference type="PROSITE" id="PS51722">
    <property type="entry name" value="G_TR_2"/>
    <property type="match status" value="1"/>
</dbReference>
<comment type="function">
    <text evidence="1">Increases the formation of ribosomal termination complexes and stimulates activities of RF-1 and RF-2. It binds guanine nucleotides and has strong preference for UGA stop codons. It may interact directly with the ribosome. The stimulation of RF-1 and RF-2 is significantly reduced by GTP and GDP, but not by GMP.</text>
</comment>
<comment type="subcellular location">
    <subcellularLocation>
        <location evidence="1">Cytoplasm</location>
    </subcellularLocation>
</comment>
<comment type="similarity">
    <text evidence="1">Belongs to the TRAFAC class translation factor GTPase superfamily. Classic translation factor GTPase family. PrfC subfamily.</text>
</comment>
<protein>
    <recommendedName>
        <fullName evidence="1">Peptide chain release factor 3</fullName>
        <shortName evidence="1">RF-3</shortName>
    </recommendedName>
</protein>
<accession>B7MTC0</accession>
<reference key="1">
    <citation type="journal article" date="2009" name="PLoS Genet.">
        <title>Organised genome dynamics in the Escherichia coli species results in highly diverse adaptive paths.</title>
        <authorList>
            <person name="Touchon M."/>
            <person name="Hoede C."/>
            <person name="Tenaillon O."/>
            <person name="Barbe V."/>
            <person name="Baeriswyl S."/>
            <person name="Bidet P."/>
            <person name="Bingen E."/>
            <person name="Bonacorsi S."/>
            <person name="Bouchier C."/>
            <person name="Bouvet O."/>
            <person name="Calteau A."/>
            <person name="Chiapello H."/>
            <person name="Clermont O."/>
            <person name="Cruveiller S."/>
            <person name="Danchin A."/>
            <person name="Diard M."/>
            <person name="Dossat C."/>
            <person name="Karoui M.E."/>
            <person name="Frapy E."/>
            <person name="Garry L."/>
            <person name="Ghigo J.M."/>
            <person name="Gilles A.M."/>
            <person name="Johnson J."/>
            <person name="Le Bouguenec C."/>
            <person name="Lescat M."/>
            <person name="Mangenot S."/>
            <person name="Martinez-Jehanne V."/>
            <person name="Matic I."/>
            <person name="Nassif X."/>
            <person name="Oztas S."/>
            <person name="Petit M.A."/>
            <person name="Pichon C."/>
            <person name="Rouy Z."/>
            <person name="Ruf C.S."/>
            <person name="Schneider D."/>
            <person name="Tourret J."/>
            <person name="Vacherie B."/>
            <person name="Vallenet D."/>
            <person name="Medigue C."/>
            <person name="Rocha E.P.C."/>
            <person name="Denamur E."/>
        </authorList>
    </citation>
    <scope>NUCLEOTIDE SEQUENCE [LARGE SCALE GENOMIC DNA]</scope>
    <source>
        <strain>ED1a</strain>
    </source>
</reference>
<gene>
    <name evidence="1" type="primary">prfC</name>
    <name type="ordered locus">ECED1_5245</name>
</gene>
<keyword id="KW-0963">Cytoplasm</keyword>
<keyword id="KW-0342">GTP-binding</keyword>
<keyword id="KW-0547">Nucleotide-binding</keyword>
<keyword id="KW-0648">Protein biosynthesis</keyword>
<evidence type="ECO:0000255" key="1">
    <source>
        <dbReference type="HAMAP-Rule" id="MF_00072"/>
    </source>
</evidence>
<sequence>MTLSPYLQEVAKRRTFAIISHPDAGKTTITEKVLLFGQAIQTAGTVKGRGSNQHAKSDWMEMEKQRGISITTSVMQFPYHDCLVNLLDTPGHEDFSEDTYRTLTAVDCCLMVIDAAKGVEDRTRKLMEVTRLRDTPILTFMNKLDRDIRDPMELLDEVENELKIGCAPITWPIGCGKLFKGVYHLYKDETYLYQSGKGHTIQEVRIVKGLNNPDLDAAVGEDLAQQLRDELELVKGASNEFDKELFLAGEITPVFFGTALGNFGVDHMLDGLVEWAPAPMPRQTDTRTVEASEDKFTGFVFKIQANMDPKHRDRVAFMRVVSGKYEKGMKLRQVRTAKDVVISDALTFMAGDRSHVEEAYPGDILGLHNHGTIQIGDTFTQGEMMKFTGIPNFAPELFRRIRLKDPLKQKQLLKGLVQLSEEGAVQVFRPISNNDLIVGAVGVLQFDVVVARLKSEYNVEAVYESVNVATARWVECADAKKFEEFKRKNESQLALDGGDNLAYIATSMVNLRLAQERYPDVQFHQTREH</sequence>
<proteinExistence type="inferred from homology"/>
<name>RF3_ECO81</name>
<organism>
    <name type="scientific">Escherichia coli O81 (strain ED1a)</name>
    <dbReference type="NCBI Taxonomy" id="585397"/>
    <lineage>
        <taxon>Bacteria</taxon>
        <taxon>Pseudomonadati</taxon>
        <taxon>Pseudomonadota</taxon>
        <taxon>Gammaproteobacteria</taxon>
        <taxon>Enterobacterales</taxon>
        <taxon>Enterobacteriaceae</taxon>
        <taxon>Escherichia</taxon>
    </lineage>
</organism>
<feature type="chain" id="PRO_1000193528" description="Peptide chain release factor 3">
    <location>
        <begin position="1"/>
        <end position="529"/>
    </location>
</feature>
<feature type="domain" description="tr-type G">
    <location>
        <begin position="11"/>
        <end position="280"/>
    </location>
</feature>
<feature type="binding site" evidence="1">
    <location>
        <begin position="20"/>
        <end position="27"/>
    </location>
    <ligand>
        <name>GTP</name>
        <dbReference type="ChEBI" id="CHEBI:37565"/>
    </ligand>
</feature>
<feature type="binding site" evidence="1">
    <location>
        <begin position="88"/>
        <end position="92"/>
    </location>
    <ligand>
        <name>GTP</name>
        <dbReference type="ChEBI" id="CHEBI:37565"/>
    </ligand>
</feature>
<feature type="binding site" evidence="1">
    <location>
        <begin position="142"/>
        <end position="145"/>
    </location>
    <ligand>
        <name>GTP</name>
        <dbReference type="ChEBI" id="CHEBI:37565"/>
    </ligand>
</feature>